<dbReference type="EC" id="1.14.19.60" evidence="3"/>
<dbReference type="EMBL" id="EU074211">
    <property type="protein sequence ID" value="ABV56598.1"/>
    <property type="status" value="ALT_INIT"/>
    <property type="molecule type" value="Genomic_DNA"/>
</dbReference>
<dbReference type="EMBL" id="KK037166">
    <property type="protein sequence ID" value="EWM18622.1"/>
    <property type="molecule type" value="Genomic_DNA"/>
</dbReference>
<dbReference type="SMR" id="A8CF74"/>
<dbReference type="STRING" id="345341.KUTG_08926"/>
<dbReference type="KEGG" id="ag:ABV56598"/>
<dbReference type="eggNOG" id="COG0644">
    <property type="taxonomic scope" value="Bacteria"/>
</dbReference>
<dbReference type="HOGENOM" id="CLU_022247_1_0_11"/>
<dbReference type="BRENDA" id="1.14.19.60">
    <property type="organism ID" value="13386"/>
</dbReference>
<dbReference type="Proteomes" id="UP000030658">
    <property type="component" value="Unassembled WGS sequence"/>
</dbReference>
<dbReference type="GO" id="GO:0004497">
    <property type="term" value="F:monooxygenase activity"/>
    <property type="evidence" value="ECO:0007669"/>
    <property type="project" value="InterPro"/>
</dbReference>
<dbReference type="GO" id="GO:0000166">
    <property type="term" value="F:nucleotide binding"/>
    <property type="evidence" value="ECO:0007669"/>
    <property type="project" value="UniProtKB-KW"/>
</dbReference>
<dbReference type="Gene3D" id="3.50.50.60">
    <property type="entry name" value="FAD/NAD(P)-binding domain"/>
    <property type="match status" value="1"/>
</dbReference>
<dbReference type="InterPro" id="IPR036188">
    <property type="entry name" value="FAD/NAD-bd_sf"/>
</dbReference>
<dbReference type="InterPro" id="IPR050816">
    <property type="entry name" value="Flavin-dep_Halogenase_NPB"/>
</dbReference>
<dbReference type="InterPro" id="IPR006905">
    <property type="entry name" value="Flavin_halogenase"/>
</dbReference>
<dbReference type="InterPro" id="IPR033856">
    <property type="entry name" value="Trp_halogen"/>
</dbReference>
<dbReference type="PANTHER" id="PTHR43747">
    <property type="entry name" value="FAD-BINDING PROTEIN"/>
    <property type="match status" value="1"/>
</dbReference>
<dbReference type="PANTHER" id="PTHR43747:SF4">
    <property type="entry name" value="FLAVIN-DEPENDENT TRYPTOPHAN HALOGENASE"/>
    <property type="match status" value="1"/>
</dbReference>
<dbReference type="Pfam" id="PF04820">
    <property type="entry name" value="Trp_halogenase"/>
    <property type="match status" value="1"/>
</dbReference>
<dbReference type="PIRSF" id="PIRSF011396">
    <property type="entry name" value="Trp_halogenase"/>
    <property type="match status" value="1"/>
</dbReference>
<dbReference type="SUPFAM" id="SSF51905">
    <property type="entry name" value="FAD/NAD(P)-binding domain"/>
    <property type="match status" value="1"/>
</dbReference>
<sequence>MVIVGGGTAGWMTAAYLKTAFGDRLSITVVESSRIGTIGVGEATFSDIQHFFQFLNLREQDWMPACNATYKLGIRFENWRHVGHHFYQPFEQIRPVYGFPLTDWWLHDAPTDRFDTDCFVMPNLCEAGRSPRHLDGTLADEDFVEEGDELANRTMSEHQGKSQFPYAYHFEAALLAKFLTGYAVDRGVEHVVDDVLDVRLDQRGWIEHVVTAEHGEIHGDLFVDCTGFRGLLLNKALGVPFVSYQDTLPNDSAVALQVPLDMQRRGIVPNTTATAREAGWIWTIPLFGRVGTGYVYAKDYLSPEEAERTLREFVGPAAADVEANHIRMRIGRSQESWRNNCVAIGLSSGFVEPLESTGIFFIHHAIEQLVKHFPAADWNPKSRDMYNSAVAHVMDGIREFLVIHYRGAARADNQYWRDTKTRPLPDGLAERIECWQTQLPDTETIYPYYHGLPPYSYMCILMGGGAIRTPASAALALTDQGAAQKEFAAVRDRAAQLRDTLPSHYEYLARMRGLDV</sequence>
<keyword id="KW-0274">FAD</keyword>
<keyword id="KW-0285">Flavoprotein</keyword>
<keyword id="KW-0547">Nucleotide-binding</keyword>
<keyword id="KW-0560">Oxidoreductase</keyword>
<keyword id="KW-1185">Reference proteome</keyword>
<protein>
    <recommendedName>
        <fullName evidence="5">7-chloro-L-tryptophan 6-halogenase KtzR</fullName>
        <ecNumber evidence="3">1.14.19.60</ecNumber>
    </recommendedName>
</protein>
<comment type="function">
    <text evidence="3">Involved in the biosynthesis of kutznerides, actinomycete-derived antifungal and antimicrobial cyclic hexadepsipeptides (PubMed:18828589). Together with KtzQ, catalyzes the regiospecific dichlorination of L-tryptophan (L-Trp) to produce 6,7-dichloro-L-tryptophan (PubMed:18828589). KtzR catalyzes the chlorination of 7-chloro-L-tryptophan at C6 position to yield 6,7-dichloro-L-tryptophan (PubMed:18828589). Can also use L-Trp as substrate and form 6-chloro-L-tryptophan, but has a 120-fold preference for 7-chloro-L-tryptophan over L-Trp (PubMed:18828589). Cannot use piperazic acid or gamma,delta-dehydropiperazic acid (PubMed:18828589).</text>
</comment>
<comment type="catalytic activity">
    <reaction evidence="3">
        <text>7-chloro-L-tryptophan + FADH2 + chloride + O2 = 6,7-dichloro-L-tryptophan + FAD + 2 H2O</text>
        <dbReference type="Rhea" id="RHEA:55904"/>
        <dbReference type="ChEBI" id="CHEBI:15377"/>
        <dbReference type="ChEBI" id="CHEBI:15379"/>
        <dbReference type="ChEBI" id="CHEBI:17996"/>
        <dbReference type="ChEBI" id="CHEBI:57692"/>
        <dbReference type="ChEBI" id="CHEBI:58307"/>
        <dbReference type="ChEBI" id="CHEBI:58713"/>
        <dbReference type="ChEBI" id="CHEBI:139336"/>
        <dbReference type="EC" id="1.14.19.60"/>
    </reaction>
    <physiologicalReaction direction="left-to-right" evidence="3">
        <dbReference type="Rhea" id="RHEA:55905"/>
    </physiologicalReaction>
</comment>
<comment type="biophysicochemical properties">
    <kinetics>
        <KM evidence="3">114 uM for 7-chloro-L-tryptophan</KM>
        <KM evidence="3">808 uM for L-Trp</KM>
        <text evidence="3">kcat is 1.4 min(-1) with 7-chloro-L-tryptophan as substrate (PubMed:18828589). kcat is 0.08 min(-1) with L-trp as substrate (PubMed:18828589).</text>
    </kinetics>
</comment>
<comment type="similarity">
    <text evidence="5">Belongs to the flavin-dependent halogenase family. Bacterial tryptophan halogenase subfamily.</text>
</comment>
<comment type="sequence caution" evidence="5">
    <conflict type="erroneous initiation">
        <sequence resource="EMBL-CDS" id="ABV56598"/>
    </conflict>
    <text>Truncated N-terminus.</text>
</comment>
<accession>A8CF74</accession>
<accession>W7SW11</accession>
<gene>
    <name evidence="4" type="primary">ktzR</name>
    <name evidence="6" type="ORF">KUTG_08926</name>
</gene>
<evidence type="ECO:0000250" key="1">
    <source>
        <dbReference type="UniProtKB" id="P95480"/>
    </source>
</evidence>
<evidence type="ECO:0000250" key="2">
    <source>
        <dbReference type="UniProtKB" id="Q8KHZ8"/>
    </source>
</evidence>
<evidence type="ECO:0000269" key="3">
    <source>
    </source>
</evidence>
<evidence type="ECO:0000303" key="4">
    <source>
    </source>
</evidence>
<evidence type="ECO:0000305" key="5"/>
<evidence type="ECO:0000312" key="6">
    <source>
        <dbReference type="EMBL" id="EWM18622.1"/>
    </source>
</evidence>
<feature type="chain" id="PRO_0000459027" description="7-chloro-L-tryptophan 6-halogenase KtzR">
    <location>
        <begin position="1"/>
        <end position="516"/>
    </location>
</feature>
<feature type="active site" evidence="1">
    <location>
        <position position="71"/>
    </location>
</feature>
<feature type="binding site" evidence="2">
    <location>
        <position position="6"/>
    </location>
    <ligand>
        <name>FAD</name>
        <dbReference type="ChEBI" id="CHEBI:57692"/>
    </ligand>
</feature>
<feature type="binding site" evidence="2">
    <location>
        <position position="8"/>
    </location>
    <ligand>
        <name>FAD</name>
        <dbReference type="ChEBI" id="CHEBI:57692"/>
    </ligand>
</feature>
<feature type="binding site" evidence="2">
    <location>
        <position position="9"/>
    </location>
    <ligand>
        <name>FAD</name>
        <dbReference type="ChEBI" id="CHEBI:57692"/>
    </ligand>
</feature>
<feature type="binding site" evidence="2">
    <location>
        <position position="42"/>
    </location>
    <ligand>
        <name>FAD</name>
        <dbReference type="ChEBI" id="CHEBI:57692"/>
    </ligand>
</feature>
<feature type="binding site" evidence="2">
    <location>
        <position position="43"/>
    </location>
    <ligand>
        <name>FAD</name>
        <dbReference type="ChEBI" id="CHEBI:57692"/>
    </ligand>
</feature>
<feature type="binding site" evidence="2">
    <location>
        <position position="195"/>
    </location>
    <ligand>
        <name>FAD</name>
        <dbReference type="ChEBI" id="CHEBI:57692"/>
    </ligand>
</feature>
<feature type="binding site" evidence="2">
    <location>
        <position position="357"/>
    </location>
    <ligand>
        <name>chloride</name>
        <dbReference type="ChEBI" id="CHEBI:17996"/>
    </ligand>
</feature>
<feature type="binding site" evidence="2">
    <location>
        <position position="358"/>
    </location>
    <ligand>
        <name>chloride</name>
        <dbReference type="ChEBI" id="CHEBI:17996"/>
    </ligand>
</feature>
<feature type="binding site" evidence="2">
    <location>
        <position position="359"/>
    </location>
    <ligand>
        <name>FAD</name>
        <dbReference type="ChEBI" id="CHEBI:57692"/>
    </ligand>
</feature>
<feature type="site" description="Important for activity" evidence="1">
    <location>
        <position position="355"/>
    </location>
</feature>
<name>7CT6H_KUTS7</name>
<organism>
    <name type="scientific">Kutzneria sp. (strain 744)</name>
    <dbReference type="NCBI Taxonomy" id="345341"/>
    <lineage>
        <taxon>Bacteria</taxon>
        <taxon>Bacillati</taxon>
        <taxon>Actinomycetota</taxon>
        <taxon>Actinomycetes</taxon>
        <taxon>Pseudonocardiales</taxon>
        <taxon>Pseudonocardiaceae</taxon>
        <taxon>Kutzneria</taxon>
    </lineage>
</organism>
<reference key="1">
    <citation type="journal article" date="2007" name="Proc. Natl. Acad. Sci. U.S.A.">
        <title>Cloning and characterization of the biosynthetic gene cluster for kutznerides.</title>
        <authorList>
            <person name="Fujimori D.G."/>
            <person name="Hrvatin S."/>
            <person name="Neumann C.S."/>
            <person name="Strieker M."/>
            <person name="Marahiel M.A."/>
            <person name="Walsh C.T."/>
        </authorList>
    </citation>
    <scope>NUCLEOTIDE SEQUENCE [GENOMIC DNA]</scope>
    <source>
        <strain>744</strain>
    </source>
</reference>
<reference key="2">
    <citation type="submission" date="2009-10" db="EMBL/GenBank/DDBJ databases">
        <title>The genome sequence of Kutzneria sp. strain 744.</title>
        <authorList>
            <consortium name="The Broad Institute Genome Sequencing Platform"/>
            <consortium name="Broad Institute Microbial Sequencing Center"/>
            <person name="Fischbach M."/>
            <person name="Godfrey P."/>
            <person name="Ward D."/>
            <person name="Young S."/>
            <person name="Zeng Q."/>
            <person name="Koehrsen M."/>
            <person name="Alvarado L."/>
            <person name="Berlin A.M."/>
            <person name="Bochicchio J."/>
            <person name="Borenstein D."/>
            <person name="Chapman S.B."/>
            <person name="Chen Z."/>
            <person name="Engels R."/>
            <person name="Freedman E."/>
            <person name="Gellesch M."/>
            <person name="Goldberg J."/>
            <person name="Griggs A."/>
            <person name="Gujja S."/>
            <person name="Heilman E.R."/>
            <person name="Heiman D.I."/>
            <person name="Hepburn T.A."/>
            <person name="Howarth C."/>
            <person name="Jen D."/>
            <person name="Larson L."/>
            <person name="Lewis B."/>
            <person name="Mehta T."/>
            <person name="Park D."/>
            <person name="Pearson M."/>
            <person name="Richards J."/>
            <person name="Roberts A."/>
            <person name="Saif S."/>
            <person name="Shea T.D."/>
            <person name="Shenoy N."/>
            <person name="Sisk P."/>
            <person name="Stolte C."/>
            <person name="Sykes S.N."/>
            <person name="Thomson T."/>
            <person name="Walk T."/>
            <person name="White J."/>
            <person name="Yandava C."/>
            <person name="Straight P."/>
            <person name="Clardy J."/>
            <person name="Hung D."/>
            <person name="Kolter R."/>
            <person name="Mekalanos J."/>
            <person name="Walker S."/>
            <person name="Walsh C.T."/>
            <person name="Wieland-Brown L.C."/>
            <person name="Haas B."/>
            <person name="Nusbaum C."/>
            <person name="Birren B."/>
        </authorList>
    </citation>
    <scope>NUCLEOTIDE SEQUENCE [LARGE SCALE GENOMIC DNA]</scope>
    <source>
        <strain>744</strain>
    </source>
</reference>
<reference key="3">
    <citation type="journal article" date="2008" name="J. Am. Chem. Soc.">
        <title>Tandem action of the O2- and FADH2-dependent halogenases KtzQ and KtzR produce 6,7-dichlorotryptophan for kutzneride assembly.</title>
        <authorList>
            <person name="Heemstra J.R. Jr."/>
            <person name="Walsh C.T."/>
        </authorList>
    </citation>
    <scope>FUNCTION</scope>
    <scope>CATALYTIC ACTIVITY</scope>
    <scope>BIOPHYSICOCHEMICAL PROPERTIES</scope>
    <source>
        <strain>744</strain>
    </source>
</reference>
<proteinExistence type="evidence at protein level"/>